<reference key="1">
    <citation type="journal article" date="2004" name="Nat. Biotechnol.">
        <title>Complete sequence and comparative genome analysis of the dairy bacterium Streptococcus thermophilus.</title>
        <authorList>
            <person name="Bolotin A."/>
            <person name="Quinquis B."/>
            <person name="Renault P."/>
            <person name="Sorokin A."/>
            <person name="Ehrlich S.D."/>
            <person name="Kulakauskas S."/>
            <person name="Lapidus A."/>
            <person name="Goltsman E."/>
            <person name="Mazur M."/>
            <person name="Pusch G.D."/>
            <person name="Fonstein M."/>
            <person name="Overbeek R."/>
            <person name="Kyprides N."/>
            <person name="Purnelle B."/>
            <person name="Prozzi D."/>
            <person name="Ngui K."/>
            <person name="Masuy D."/>
            <person name="Hancy F."/>
            <person name="Burteau S."/>
            <person name="Boutry M."/>
            <person name="Delcour J."/>
            <person name="Goffeau A."/>
            <person name="Hols P."/>
        </authorList>
    </citation>
    <scope>NUCLEOTIDE SEQUENCE [LARGE SCALE GENOMIC DNA]</scope>
    <source>
        <strain>CNRZ 1066</strain>
    </source>
</reference>
<sequence length="112" mass="12791">MRNIYDLANELERGIRALPEYKNLVEKKEAIATDAEASALFKEFTDFQEDFYAKMQAGTMPTAEEQAAVQELGQKVEANALLKEYLTAQQSLSVYLNDIERIIFKPLQELNN</sequence>
<name>Y643_STRT1</name>
<feature type="chain" id="PRO_0000110000" description="UPF0342 protein str0643">
    <location>
        <begin position="1"/>
        <end position="112"/>
    </location>
</feature>
<gene>
    <name type="ordered locus">str0643</name>
</gene>
<comment type="similarity">
    <text evidence="1">Belongs to the UPF0342 family.</text>
</comment>
<organism>
    <name type="scientific">Streptococcus thermophilus (strain CNRZ 1066)</name>
    <dbReference type="NCBI Taxonomy" id="299768"/>
    <lineage>
        <taxon>Bacteria</taxon>
        <taxon>Bacillati</taxon>
        <taxon>Bacillota</taxon>
        <taxon>Bacilli</taxon>
        <taxon>Lactobacillales</taxon>
        <taxon>Streptococcaceae</taxon>
        <taxon>Streptococcus</taxon>
    </lineage>
</organism>
<evidence type="ECO:0000255" key="1">
    <source>
        <dbReference type="HAMAP-Rule" id="MF_01526"/>
    </source>
</evidence>
<proteinExistence type="inferred from homology"/>
<accession>Q5M0L7</accession>
<protein>
    <recommendedName>
        <fullName evidence="1">UPF0342 protein str0643</fullName>
    </recommendedName>
</protein>
<dbReference type="EMBL" id="CP000024">
    <property type="protein sequence ID" value="AAV62239.1"/>
    <property type="molecule type" value="Genomic_DNA"/>
</dbReference>
<dbReference type="RefSeq" id="WP_002947244.1">
    <property type="nucleotide sequence ID" value="NC_006449.1"/>
</dbReference>
<dbReference type="SMR" id="Q5M0L7"/>
<dbReference type="KEGG" id="stc:str0643"/>
<dbReference type="HOGENOM" id="CLU_140243_2_0_9"/>
<dbReference type="Gene3D" id="1.20.1500.10">
    <property type="entry name" value="YheA/YmcA-like"/>
    <property type="match status" value="1"/>
</dbReference>
<dbReference type="HAMAP" id="MF_01526">
    <property type="entry name" value="UPF0342"/>
    <property type="match status" value="1"/>
</dbReference>
<dbReference type="InterPro" id="IPR010368">
    <property type="entry name" value="Com_YlbF"/>
</dbReference>
<dbReference type="InterPro" id="IPR023378">
    <property type="entry name" value="YheA/YmcA-like_dom_sf"/>
</dbReference>
<dbReference type="NCBIfam" id="NF010209">
    <property type="entry name" value="PRK13676.1-1"/>
    <property type="match status" value="1"/>
</dbReference>
<dbReference type="Pfam" id="PF06133">
    <property type="entry name" value="Com_YlbF"/>
    <property type="match status" value="1"/>
</dbReference>
<dbReference type="SUPFAM" id="SSF158622">
    <property type="entry name" value="YheA/YmcA-like"/>
    <property type="match status" value="1"/>
</dbReference>